<accession>Q705G8</accession>
<accession>Q8BDG5</accession>
<sequence>MADKSGRLLGGCSFVLDEADCSDLEIDSDDESDKENVPNGQDMCNSFDAEFIDNAPLAQGNTLALFQSQVAQAGKQKVNYLKRKLHLESSELGTVGRAVLQPVNHSTPAAKRRLFECSSSENEVSYAASPAAANTQVFRNQNSGSVGGSSGFGSQASVSQSQQNSNLHLQILKSKNSAACKLAVFKFVYAASFCDLTRPFKNDKTTNYQWVAAVFGVSEELFEASKQLLGRSCTYLHATCRAHEKGSVALLLLSFHVAKSRETVTNLLKNLLNLRAEHMMLQPPKLRGVTSAMFWYKMTLSPNTYTWGQLPRWIEQQILITENSSEVLKFDFSHMVQWALDNEMMDESSIAFHYAQMADHDSNARAWLGLSNQAKIVKDVCTMVHHYQRAIMRSMTMSAYVHKMCERVNVTGSWLVIMQFLKFHGIEPIRFVNALRPWLQGVPKKNCLAFIGPPDTGKSLFTNSLMSFLKGKVLNFANSASHFWLAPLTEAKVALIDDATHACLKYCDTYLRNFFDGYSVCIDRKHKNAVQIKAPPMLLTSNIDIQAEEKYSYLKSRVTCFYFNDKCPLNEDGKPLFQITDPDWKSFFERLWQRLELSDQEEEEEGDENGSRGTFICSTRNSNDFT</sequence>
<name>VE1_BPV5</name>
<organism>
    <name type="scientific">Bovine papillomavirus type 5</name>
    <dbReference type="NCBI Taxonomy" id="2491661"/>
    <lineage>
        <taxon>Viruses</taxon>
        <taxon>Monodnaviria</taxon>
        <taxon>Shotokuvirae</taxon>
        <taxon>Cossaviricota</taxon>
        <taxon>Papovaviricetes</taxon>
        <taxon>Zurhausenvirales</taxon>
        <taxon>Papillomaviridae</taxon>
        <taxon>Firstpapillomavirinae</taxon>
        <taxon>Epsilonpapillomavirus</taxon>
        <taxon>Epsilonpapillomavirus 1</taxon>
    </lineage>
</organism>
<evidence type="ECO:0000255" key="1">
    <source>
        <dbReference type="HAMAP-Rule" id="MF_04000"/>
    </source>
</evidence>
<evidence type="ECO:0000256" key="2">
    <source>
        <dbReference type="SAM" id="MobiDB-lite"/>
    </source>
</evidence>
<evidence type="ECO:0000305" key="3"/>
<comment type="function">
    <text evidence="1">ATP-dependent DNA 3'-5' helicase required for initiation of viral DNA replication. It forms a complex with the viral E2 protein. The E1-E2 complex binds to the replication origin which contains binding sites for both proteins. During the initial step, a dimer of E1 interacts with a dimer of protein E2 leading to a complex that binds the viral origin of replication with high specificity. Then, a second dimer of E1 displaces the E2 dimer in an ATP-dependent manner to form the E1 tetramer. Following this, two E1 monomers are added to each half of the site, which results in the formation of two E1 trimers on the viral ori. Subsequently, two hexamers will be created. The double hexamer acts as a bi-directional helicase machinery and unwinds the viral DNA and then recruits the host DNA polymerase to start replication.</text>
</comment>
<comment type="catalytic activity">
    <reaction evidence="1">
        <text>Couples ATP hydrolysis with the unwinding of duplex DNA by translocating in the 3'-5' direction.</text>
        <dbReference type="EC" id="5.6.2.4"/>
    </reaction>
</comment>
<comment type="catalytic activity">
    <reaction evidence="1">
        <text>ATP + H2O = ADP + phosphate + H(+)</text>
        <dbReference type="Rhea" id="RHEA:13065"/>
        <dbReference type="ChEBI" id="CHEBI:15377"/>
        <dbReference type="ChEBI" id="CHEBI:15378"/>
        <dbReference type="ChEBI" id="CHEBI:30616"/>
        <dbReference type="ChEBI" id="CHEBI:43474"/>
        <dbReference type="ChEBI" id="CHEBI:456216"/>
        <dbReference type="EC" id="5.6.2.4"/>
    </reaction>
</comment>
<comment type="subunit">
    <text evidence="1">Can form hexamers. Interacts with E2 protein; this interaction increases E1 DNA binding specificity. Interacts with host DNA polymerase subunit POLA2. Interacts with host single stranded DNA-binding protein RPA1. Interacts with host TOP1; this interaction stimulates the enzymatic activity of TOP1.</text>
</comment>
<comment type="subcellular location">
    <subcellularLocation>
        <location evidence="1">Host nucleus</location>
    </subcellularLocation>
</comment>
<comment type="PTM">
    <text evidence="1">Phosphorylated.</text>
</comment>
<comment type="PTM">
    <text evidence="1">Sumoylated.</text>
</comment>
<comment type="similarity">
    <text evidence="1">Belongs to the papillomaviridae E1 protein family.</text>
</comment>
<comment type="sequence caution" evidence="3">
    <conflict type="erroneous gene model prediction">
        <sequence resource="EMBL-CDS" id="AAN09926"/>
    </conflict>
</comment>
<feature type="chain" id="PRO_0000133094" description="Replication protein E1">
    <location>
        <begin position="1"/>
        <end position="626"/>
    </location>
</feature>
<feature type="domain" description="SF3 helicase" evidence="1">
    <location>
        <begin position="412"/>
        <end position="576"/>
    </location>
</feature>
<feature type="region of interest" description="DNA-binding region" evidence="1">
    <location>
        <begin position="160"/>
        <end position="327"/>
    </location>
</feature>
<feature type="region of interest" description="Disordered" evidence="2">
    <location>
        <begin position="598"/>
        <end position="626"/>
    </location>
</feature>
<feature type="short sequence motif" description="Nuclear localization signal" evidence="1">
    <location>
        <begin position="82"/>
        <end position="84"/>
    </location>
</feature>
<feature type="compositionally biased region" description="Acidic residues" evidence="2">
    <location>
        <begin position="598"/>
        <end position="608"/>
    </location>
</feature>
<feature type="compositionally biased region" description="Polar residues" evidence="2">
    <location>
        <begin position="616"/>
        <end position="626"/>
    </location>
</feature>
<feature type="binding site" evidence="1">
    <location>
        <begin position="452"/>
        <end position="459"/>
    </location>
    <ligand>
        <name>ATP</name>
        <dbReference type="ChEBI" id="CHEBI:30616"/>
    </ligand>
</feature>
<feature type="modified residue" description="Phosphoserine; by host" evidence="1">
    <location>
        <position position="90"/>
    </location>
</feature>
<feature type="modified residue" description="Phosphoserine; by host" evidence="1">
    <location>
        <position position="106"/>
    </location>
</feature>
<feature type="cross-link" description="Glycyl lysine isopeptide (Lys-Gly) (interchain with G-Cter in SUMO)" evidence="1">
    <location>
        <position position="533"/>
    </location>
</feature>
<organismHost>
    <name type="scientific">Bos taurus</name>
    <name type="common">Bovine</name>
    <dbReference type="NCBI Taxonomy" id="9913"/>
</organismHost>
<protein>
    <recommendedName>
        <fullName evidence="1">Replication protein E1</fullName>
        <ecNumber evidence="1">5.6.2.4</ecNumber>
    </recommendedName>
    <alternativeName>
        <fullName evidence="1">ATP-dependent helicase E1</fullName>
    </alternativeName>
    <alternativeName>
        <fullName evidence="1">DNA 3'-5' helicase E1</fullName>
    </alternativeName>
</protein>
<dbReference type="EC" id="5.6.2.4" evidence="1"/>
<dbReference type="EMBL" id="AF457465">
    <property type="protein sequence ID" value="AAN09926.1"/>
    <property type="status" value="ALT_SEQ"/>
    <property type="molecule type" value="Genomic_DNA"/>
</dbReference>
<dbReference type="EMBL" id="AJ620206">
    <property type="protein sequence ID" value="CAF05673.1"/>
    <property type="molecule type" value="Genomic_DNA"/>
</dbReference>
<dbReference type="RefSeq" id="NP_694432.1">
    <property type="nucleotide sequence ID" value="NC_004195.1"/>
</dbReference>
<dbReference type="SMR" id="Q705G8"/>
<dbReference type="GeneID" id="955403"/>
<dbReference type="KEGG" id="vg:955403"/>
<dbReference type="Proteomes" id="UP000008785">
    <property type="component" value="Genome"/>
</dbReference>
<dbReference type="Proteomes" id="UP000185273">
    <property type="component" value="Genome"/>
</dbReference>
<dbReference type="GO" id="GO:0042025">
    <property type="term" value="C:host cell nucleus"/>
    <property type="evidence" value="ECO:0007669"/>
    <property type="project" value="UniProtKB-SubCell"/>
</dbReference>
<dbReference type="GO" id="GO:0005524">
    <property type="term" value="F:ATP binding"/>
    <property type="evidence" value="ECO:0007669"/>
    <property type="project" value="UniProtKB-UniRule"/>
</dbReference>
<dbReference type="GO" id="GO:0016887">
    <property type="term" value="F:ATP hydrolysis activity"/>
    <property type="evidence" value="ECO:0007669"/>
    <property type="project" value="RHEA"/>
</dbReference>
<dbReference type="GO" id="GO:0003677">
    <property type="term" value="F:DNA binding"/>
    <property type="evidence" value="ECO:0007669"/>
    <property type="project" value="UniProtKB-UniRule"/>
</dbReference>
<dbReference type="GO" id="GO:0003678">
    <property type="term" value="F:DNA helicase activity"/>
    <property type="evidence" value="ECO:0007669"/>
    <property type="project" value="UniProtKB-UniRule"/>
</dbReference>
<dbReference type="GO" id="GO:0006260">
    <property type="term" value="P:DNA replication"/>
    <property type="evidence" value="ECO:0007669"/>
    <property type="project" value="UniProtKB-UniRule"/>
</dbReference>
<dbReference type="Gene3D" id="3.40.1310.10">
    <property type="match status" value="1"/>
</dbReference>
<dbReference type="Gene3D" id="3.40.50.300">
    <property type="entry name" value="P-loop containing nucleotide triphosphate hydrolases"/>
    <property type="match status" value="1"/>
</dbReference>
<dbReference type="Gene3D" id="1.10.10.510">
    <property type="entry name" value="Zinc finger, large T-antigen D1 domain"/>
    <property type="match status" value="1"/>
</dbReference>
<dbReference type="HAMAP" id="MF_04000">
    <property type="entry name" value="PPV_E1"/>
    <property type="match status" value="1"/>
</dbReference>
<dbReference type="InterPro" id="IPR014015">
    <property type="entry name" value="Helicase_SF3_DNA-vir"/>
</dbReference>
<dbReference type="InterPro" id="IPR027417">
    <property type="entry name" value="P-loop_NTPase"/>
</dbReference>
<dbReference type="InterPro" id="IPR001177">
    <property type="entry name" value="PPV_DNA_helicase_E1_C"/>
</dbReference>
<dbReference type="InterPro" id="IPR014000">
    <property type="entry name" value="PPV_DNA_helicase_E1_N"/>
</dbReference>
<dbReference type="InterPro" id="IPR046832">
    <property type="entry name" value="PPV_E1_DBD"/>
</dbReference>
<dbReference type="InterPro" id="IPR046935">
    <property type="entry name" value="PPV_E1_DBD_sf"/>
</dbReference>
<dbReference type="InterPro" id="IPR016393">
    <property type="entry name" value="Rep_E1_papillomaV"/>
</dbReference>
<dbReference type="InterPro" id="IPR037102">
    <property type="entry name" value="Znf_lg_T-Ag_D1_dom_sf"/>
</dbReference>
<dbReference type="Pfam" id="PF00519">
    <property type="entry name" value="PPV_E1_C"/>
    <property type="match status" value="1"/>
</dbReference>
<dbReference type="Pfam" id="PF20450">
    <property type="entry name" value="PPV_E1_DBD"/>
    <property type="match status" value="1"/>
</dbReference>
<dbReference type="Pfam" id="PF00524">
    <property type="entry name" value="PPV_E1_N"/>
    <property type="match status" value="1"/>
</dbReference>
<dbReference type="PIRSF" id="PIRSF003383">
    <property type="entry name" value="Rep_E1_papillomaV"/>
    <property type="match status" value="1"/>
</dbReference>
<dbReference type="SUPFAM" id="SSF55464">
    <property type="entry name" value="Origin of replication-binding domain, RBD-like"/>
    <property type="match status" value="1"/>
</dbReference>
<dbReference type="SUPFAM" id="SSF52540">
    <property type="entry name" value="P-loop containing nucleoside triphosphate hydrolases"/>
    <property type="match status" value="1"/>
</dbReference>
<dbReference type="PROSITE" id="PS51206">
    <property type="entry name" value="SF3_HELICASE_1"/>
    <property type="match status" value="1"/>
</dbReference>
<proteinExistence type="inferred from homology"/>
<gene>
    <name evidence="1" type="primary">E1</name>
</gene>
<keyword id="KW-0067">ATP-binding</keyword>
<keyword id="KW-0235">DNA replication</keyword>
<keyword id="KW-0238">DNA-binding</keyword>
<keyword id="KW-0244">Early protein</keyword>
<keyword id="KW-0347">Helicase</keyword>
<keyword id="KW-1048">Host nucleus</keyword>
<keyword id="KW-0378">Hydrolase</keyword>
<keyword id="KW-0413">Isomerase</keyword>
<keyword id="KW-1017">Isopeptide bond</keyword>
<keyword id="KW-0547">Nucleotide-binding</keyword>
<keyword id="KW-0597">Phosphoprotein</keyword>
<keyword id="KW-1185">Reference proteome</keyword>
<keyword id="KW-0832">Ubl conjugation</keyword>
<reference key="1">
    <citation type="journal article" date="2002" name="J. Virol.">
        <title>Lack of canonical E6 and E7 open reading frames in bird papillomaviruses: Fringilla coelebs papillomavirus and Psittacus erithacus timneh papillomavirus.</title>
        <authorList>
            <person name="Terai M."/>
            <person name="DeSalle R."/>
            <person name="Burk R.D."/>
        </authorList>
    </citation>
    <scope>NUCLEOTIDE SEQUENCE [GENOMIC DNA]</scope>
</reference>
<reference key="2">
    <citation type="submission" date="2004-01" db="EMBL/GenBank/DDBJ databases">
        <title>Sequencing of the complete genomes of BPV 3, BPV 5 and BPV 6.</title>
        <authorList>
            <person name="Delius H."/>
            <person name="de Villiers E.M."/>
        </authorList>
    </citation>
    <scope>NUCLEOTIDE SEQUENCE [GENOMIC DNA]</scope>
</reference>